<sequence>MIQQQTYLNVADNSGARKLMCLRVLGTGNCTYGGIGDQIIAVVKDALPNMPIKKSDVVRAVIVRTKQPLRRASGMSIRFDDNAAVIINAEGNPRGTRVFGPVARELRDKNFTKIVSLAPEVL</sequence>
<keyword id="KW-1185">Reference proteome</keyword>
<keyword id="KW-0687">Ribonucleoprotein</keyword>
<keyword id="KW-0689">Ribosomal protein</keyword>
<keyword id="KW-0694">RNA-binding</keyword>
<keyword id="KW-0699">rRNA-binding</keyword>
<reference key="1">
    <citation type="journal article" date="1996" name="DNA Res.">
        <title>Sequence analysis of the genome of the unicellular cyanobacterium Synechocystis sp. strain PCC6803. II. Sequence determination of the entire genome and assignment of potential protein-coding regions.</title>
        <authorList>
            <person name="Kaneko T."/>
            <person name="Sato S."/>
            <person name="Kotani H."/>
            <person name="Tanaka A."/>
            <person name="Asamizu E."/>
            <person name="Nakamura Y."/>
            <person name="Miyajima N."/>
            <person name="Hirosawa M."/>
            <person name="Sugiura M."/>
            <person name="Sasamoto S."/>
            <person name="Kimura T."/>
            <person name="Hosouchi T."/>
            <person name="Matsuno A."/>
            <person name="Muraki A."/>
            <person name="Nakazaki N."/>
            <person name="Naruo K."/>
            <person name="Okumura S."/>
            <person name="Shimpo S."/>
            <person name="Takeuchi C."/>
            <person name="Wada T."/>
            <person name="Watanabe A."/>
            <person name="Yamada M."/>
            <person name="Yasuda M."/>
            <person name="Tabata S."/>
        </authorList>
    </citation>
    <scope>NUCLEOTIDE SEQUENCE [LARGE SCALE GENOMIC DNA]</scope>
    <source>
        <strain>ATCC 27184 / PCC 6803 / Kazusa</strain>
    </source>
</reference>
<reference key="2">
    <citation type="journal article" date="2012" name="PLoS Genet.">
        <title>RsfA (YbeB) proteins are conserved ribosomal silencing factors.</title>
        <authorList>
            <person name="Hauser R."/>
            <person name="Pech M."/>
            <person name="Kijek J."/>
            <person name="Yamamoto H."/>
            <person name="Titz B."/>
            <person name="Naeve F."/>
            <person name="Tovchigrechko A."/>
            <person name="Yamamoto K."/>
            <person name="Szaflarski W."/>
            <person name="Takeuchi N."/>
            <person name="Stellberger T."/>
            <person name="Diefenbacher M.E."/>
            <person name="Nierhaus K.H."/>
            <person name="Uetz P."/>
        </authorList>
    </citation>
    <scope>INTERACTION WITH RSFS</scope>
    <source>
        <strain>ATCC 27184 / PCC 6803 / Kazusa</strain>
    </source>
</reference>
<feature type="chain" id="PRO_0000128563" description="Large ribosomal subunit protein uL14">
    <location>
        <begin position="1"/>
        <end position="122"/>
    </location>
</feature>
<proteinExistence type="evidence at protein level"/>
<protein>
    <recommendedName>
        <fullName evidence="1">Large ribosomal subunit protein uL14</fullName>
    </recommendedName>
    <alternativeName>
        <fullName evidence="2">50S ribosomal protein L14</fullName>
    </alternativeName>
</protein>
<dbReference type="EMBL" id="BA000022">
    <property type="protein sequence ID" value="BAA17339.1"/>
    <property type="molecule type" value="Genomic_DNA"/>
</dbReference>
<dbReference type="PIR" id="S77492">
    <property type="entry name" value="S77492"/>
</dbReference>
<dbReference type="SMR" id="P73310"/>
<dbReference type="FunCoup" id="P73310">
    <property type="interactions" value="446"/>
</dbReference>
<dbReference type="STRING" id="1148.gene:10498202"/>
<dbReference type="PaxDb" id="1148-1652417"/>
<dbReference type="EnsemblBacteria" id="BAA17339">
    <property type="protein sequence ID" value="BAA17339"/>
    <property type="gene ID" value="BAA17339"/>
</dbReference>
<dbReference type="KEGG" id="syn:sll1806"/>
<dbReference type="eggNOG" id="COG0093">
    <property type="taxonomic scope" value="Bacteria"/>
</dbReference>
<dbReference type="InParanoid" id="P73310"/>
<dbReference type="PhylomeDB" id="P73310"/>
<dbReference type="Proteomes" id="UP000001425">
    <property type="component" value="Chromosome"/>
</dbReference>
<dbReference type="GO" id="GO:0022625">
    <property type="term" value="C:cytosolic large ribosomal subunit"/>
    <property type="evidence" value="ECO:0000318"/>
    <property type="project" value="GO_Central"/>
</dbReference>
<dbReference type="GO" id="GO:0070180">
    <property type="term" value="F:large ribosomal subunit rRNA binding"/>
    <property type="evidence" value="ECO:0000318"/>
    <property type="project" value="GO_Central"/>
</dbReference>
<dbReference type="GO" id="GO:0003735">
    <property type="term" value="F:structural constituent of ribosome"/>
    <property type="evidence" value="ECO:0000318"/>
    <property type="project" value="GO_Central"/>
</dbReference>
<dbReference type="GO" id="GO:0006412">
    <property type="term" value="P:translation"/>
    <property type="evidence" value="ECO:0007669"/>
    <property type="project" value="UniProtKB-UniRule"/>
</dbReference>
<dbReference type="CDD" id="cd00337">
    <property type="entry name" value="Ribosomal_uL14"/>
    <property type="match status" value="1"/>
</dbReference>
<dbReference type="FunFam" id="2.40.150.20:FF:000001">
    <property type="entry name" value="50S ribosomal protein L14"/>
    <property type="match status" value="1"/>
</dbReference>
<dbReference type="Gene3D" id="2.40.150.20">
    <property type="entry name" value="Ribosomal protein L14"/>
    <property type="match status" value="1"/>
</dbReference>
<dbReference type="HAMAP" id="MF_01367">
    <property type="entry name" value="Ribosomal_uL14"/>
    <property type="match status" value="1"/>
</dbReference>
<dbReference type="InterPro" id="IPR000218">
    <property type="entry name" value="Ribosomal_uL14"/>
</dbReference>
<dbReference type="InterPro" id="IPR005745">
    <property type="entry name" value="Ribosomal_uL14_bac-type"/>
</dbReference>
<dbReference type="InterPro" id="IPR019972">
    <property type="entry name" value="Ribosomal_uL14_CS"/>
</dbReference>
<dbReference type="InterPro" id="IPR036853">
    <property type="entry name" value="Ribosomal_uL14_sf"/>
</dbReference>
<dbReference type="NCBIfam" id="TIGR01067">
    <property type="entry name" value="rplN_bact"/>
    <property type="match status" value="1"/>
</dbReference>
<dbReference type="PANTHER" id="PTHR11761">
    <property type="entry name" value="50S/60S RIBOSOMAL PROTEIN L14/L23"/>
    <property type="match status" value="1"/>
</dbReference>
<dbReference type="PANTHER" id="PTHR11761:SF3">
    <property type="entry name" value="LARGE RIBOSOMAL SUBUNIT PROTEIN UL14M"/>
    <property type="match status" value="1"/>
</dbReference>
<dbReference type="Pfam" id="PF00238">
    <property type="entry name" value="Ribosomal_L14"/>
    <property type="match status" value="1"/>
</dbReference>
<dbReference type="SMART" id="SM01374">
    <property type="entry name" value="Ribosomal_L14"/>
    <property type="match status" value="1"/>
</dbReference>
<dbReference type="SUPFAM" id="SSF50193">
    <property type="entry name" value="Ribosomal protein L14"/>
    <property type="match status" value="1"/>
</dbReference>
<dbReference type="PROSITE" id="PS00049">
    <property type="entry name" value="RIBOSOMAL_L14"/>
    <property type="match status" value="1"/>
</dbReference>
<accession>P73310</accession>
<comment type="function">
    <text evidence="1">Binds to 23S rRNA. Forms part of two intersubunit bridges in the 70S ribosome.</text>
</comment>
<comment type="subunit">
    <text evidence="1">Part of the 50S ribosomal subunit. Forms a cluster with proteins L3 and L19. In the 70S ribosome, L14 and L19 interact and together make contacts with the 16S rRNA in bridges B5 and B8. Can interact with ribosomal silencing factor RsfS, which may inhibit ribosomal subunit association (By similarity).</text>
</comment>
<comment type="similarity">
    <text evidence="1">Belongs to the universal ribosomal protein uL14 family.</text>
</comment>
<name>RL14_SYNY3</name>
<evidence type="ECO:0000255" key="1">
    <source>
        <dbReference type="HAMAP-Rule" id="MF_01367"/>
    </source>
</evidence>
<evidence type="ECO:0000305" key="2"/>
<organism>
    <name type="scientific">Synechocystis sp. (strain ATCC 27184 / PCC 6803 / Kazusa)</name>
    <dbReference type="NCBI Taxonomy" id="1111708"/>
    <lineage>
        <taxon>Bacteria</taxon>
        <taxon>Bacillati</taxon>
        <taxon>Cyanobacteriota</taxon>
        <taxon>Cyanophyceae</taxon>
        <taxon>Synechococcales</taxon>
        <taxon>Merismopediaceae</taxon>
        <taxon>Synechocystis</taxon>
    </lineage>
</organism>
<gene>
    <name evidence="1" type="primary">rplN</name>
    <name evidence="1" type="synonym">rpl14</name>
    <name type="ordered locus">sll1806</name>
</gene>